<evidence type="ECO:0000250" key="1"/>
<evidence type="ECO:0000250" key="2">
    <source>
        <dbReference type="UniProtKB" id="P26038"/>
    </source>
</evidence>
<evidence type="ECO:0000250" key="3">
    <source>
        <dbReference type="UniProtKB" id="P26041"/>
    </source>
</evidence>
<evidence type="ECO:0000250" key="4">
    <source>
        <dbReference type="UniProtKB" id="P26043"/>
    </source>
</evidence>
<evidence type="ECO:0000255" key="5">
    <source>
        <dbReference type="PROSITE-ProRule" id="PRU00084"/>
    </source>
</evidence>
<evidence type="ECO:0000256" key="6">
    <source>
        <dbReference type="SAM" id="MobiDB-lite"/>
    </source>
</evidence>
<sequence length="577" mass="67975">MPKTINVRVTTMDAELEFAIQPNTTGKQLFDQVVKTIGLREIWFFGLQYQDTKGFFTWLKLNKKVTAQDVRKESPLLFKFRAKFYPEDVSEELIQDITQRLFFLQVKEDILNDDIYCPPETAVLLASYAVQSKYGDFNKEVHKSGYLAGDRLLPQRVLEQHKLNKDQWEERIQVWHEEHRGMLREDAVLEYLKIAQDLEMYGVNYFSIKNKKGSELWLGVDALGLNIYEQNDRLTPKIGFPWSEIRNISFNDKKFVIKPIDKKAPDFVFYAPRLRINKRILALCMGNHELYMRRRKPDTIEVQQMKAQAREEKHQKQMERALLENEKKKREMAEKEKEKIEREKEELMERLKQIEEQTKKAQQELEEQTRRALELEQERKRAQSEAEKLAKERQEAEEAKEALLQASQDQKKTQEQLALEMAELTARISQLEMARQKKESEAVEWQQKAQMVQEDLEKTRAELKTAMSTPHVAEPAENEQDEQDENGAEASAELRADAMAKDRSEEERTTEAEKNERVQKHLKALTSELANARDESKKTANDMIHAENMRLGRDKYKTLRQIRQGNTKQRIDEFESM</sequence>
<protein>
    <recommendedName>
        <fullName evidence="2">Moesin</fullName>
    </recommendedName>
    <alternativeName>
        <fullName>Membrane-organizing extension spike protein</fullName>
    </alternativeName>
</protein>
<gene>
    <name evidence="2" type="primary">MSN</name>
</gene>
<organism>
    <name type="scientific">Bos taurus</name>
    <name type="common">Bovine</name>
    <dbReference type="NCBI Taxonomy" id="9913"/>
    <lineage>
        <taxon>Eukaryota</taxon>
        <taxon>Metazoa</taxon>
        <taxon>Chordata</taxon>
        <taxon>Craniata</taxon>
        <taxon>Vertebrata</taxon>
        <taxon>Euteleostomi</taxon>
        <taxon>Mammalia</taxon>
        <taxon>Eutheria</taxon>
        <taxon>Laurasiatheria</taxon>
        <taxon>Artiodactyla</taxon>
        <taxon>Ruminantia</taxon>
        <taxon>Pecora</taxon>
        <taxon>Bovidae</taxon>
        <taxon>Bovinae</taxon>
        <taxon>Bos</taxon>
    </lineage>
</organism>
<keyword id="KW-0007">Acetylation</keyword>
<keyword id="KW-1003">Cell membrane</keyword>
<keyword id="KW-0966">Cell projection</keyword>
<keyword id="KW-0963">Cytoplasm</keyword>
<keyword id="KW-0206">Cytoskeleton</keyword>
<keyword id="KW-0472">Membrane</keyword>
<keyword id="KW-0597">Phosphoprotein</keyword>
<keyword id="KW-1185">Reference proteome</keyword>
<keyword id="KW-0702">S-nitrosylation</keyword>
<comment type="function">
    <text evidence="2 3">Ezrin-radixin-moesin (ERM) family protein that connects the actin cytoskeleton to the plasma membrane and thereby regulates the structure and function of specific domains of the cell cortex. Tethers actin filaments by oscillating between a resting and an activated state providing transient interactions between moesin and the actin cytoskeleton. Once phosphorylated on its C-terminal threonine, moesin is activated leading to interaction with F-actin and cytoskeletal rearrangement. These rearrangements regulate many cellular processes, including cell shape determination, membrane transport, and signal transduction. The role of moesin is particularly important in immunity acting on both T and B-cells homeostasis and self-tolerance, regulating lymphocyte egress from lymphoid organs (By similarity). Modulates phagolysosomal biogenesis in macrophages (By similarity). Participates also in immunologic synapse formation (By similarity).</text>
</comment>
<comment type="activity regulation">
    <text evidence="2">A head-to-tail association, of the N-terminal and C-terminal halves results in a closed conformation (inactive form) which is incapable of actin or membrane-binding.</text>
</comment>
<comment type="subunit">
    <text evidence="2 3">In resting T-cells, part of a PAG1-NHERF1-MSN complex which is disrupted upon TCR activation. Interacts with NHERF1. Interacts with PPP1R16B. Interacts with PDZD8. Interacts with SELPLG and SYK; these interactions mediate the activation of SYK by SELPLG. Interacts with PDPN (via cytoplasmic domain); this interaction activates RHOA and promotes epithelial-mesenchymal transition. Interacts with SPN/CD43 cytoplasmic tail (By similarity). Interacts with CD44 (By similarity). Interacts with ICAM2 (By similarity). Interacts with ICAM3 (via C-terminus). Interacts with PDZD8. Interacts with F-actin. Interacts with CD46 (By similarity). Interacts with PTPN6 (By similarity).</text>
</comment>
<comment type="subcellular location">
    <subcellularLocation>
        <location evidence="2">Cell membrane</location>
        <topology evidence="3">Peripheral membrane protein</topology>
        <orientation evidence="3">Cytoplasmic side</orientation>
    </subcellularLocation>
    <subcellularLocation>
        <location evidence="3">Cytoplasm</location>
        <location evidence="3">Cytoskeleton</location>
    </subcellularLocation>
    <subcellularLocation>
        <location evidence="3">Apical cell membrane</location>
        <topology evidence="3">Peripheral membrane protein</topology>
        <orientation evidence="3">Cytoplasmic side</orientation>
    </subcellularLocation>
    <subcellularLocation>
        <location evidence="3">Cell projection</location>
        <location evidence="3">Microvillus membrane</location>
        <topology evidence="3">Peripheral membrane protein</topology>
        <orientation evidence="3">Cytoplasmic side</orientation>
    </subcellularLocation>
    <subcellularLocation>
        <location evidence="3">Cell projection</location>
        <location evidence="3">Microvillus</location>
    </subcellularLocation>
    <text evidence="2 3">Phosphorylated form is enriched in microvilli-like structures at apical membrane. Increased cell membrane localization of both phosphorylated and non-phosphorylated forms seen after thrombin treatment (By similarity). Localizes at the uropods of T lymphoblasts (By similarity).</text>
</comment>
<comment type="domain">
    <text evidence="2">The [IL]-x-C-x-x-[DE] motif is a proposed target motif for cysteine S-nitrosylation mediated by the iNOS-S100A8/A9 transnitrosylase complex.</text>
</comment>
<comment type="PTM">
    <text evidence="1">Phosphorylation on Thr-558 is crucial for the formation of microvilli-like structures. Phosphorylation by ROCK2 suppresses the head-to-tail association of the N-terminal and C-terminal halves resulting in an opened conformation which is capable of actin and membrane-binding. Phosphorylation on Thr-558 by STK10 negatively regulates lymphocyte migration and polarization (By similarity).</text>
</comment>
<comment type="PTM">
    <text evidence="2">S-nitrosylation of Cys-117 is induced by interferon-gamma and oxidatively-modified low-densitity lipoprotein (LDL(ox)) implicating the iNOS-S100A8/9 transnitrosylase complex.</text>
</comment>
<dbReference type="EMBL" id="BC113313">
    <property type="protein sequence ID" value="AAI13314.1"/>
    <property type="molecule type" value="mRNA"/>
</dbReference>
<dbReference type="RefSeq" id="NP_001039942.1">
    <property type="nucleotide sequence ID" value="NM_001046477.1"/>
</dbReference>
<dbReference type="SMR" id="Q2HJ49"/>
<dbReference type="FunCoup" id="Q2HJ49">
    <property type="interactions" value="2341"/>
</dbReference>
<dbReference type="STRING" id="9913.ENSBTAP00000017503"/>
<dbReference type="PaxDb" id="9913-ENSBTAP00000017503"/>
<dbReference type="PeptideAtlas" id="Q2HJ49"/>
<dbReference type="Ensembl" id="ENSBTAT00000017503.4">
    <property type="protein sequence ID" value="ENSBTAP00000017503.3"/>
    <property type="gene ID" value="ENSBTAG00000003418.6"/>
</dbReference>
<dbReference type="GeneID" id="540426"/>
<dbReference type="KEGG" id="bta:540426"/>
<dbReference type="CTD" id="4478"/>
<dbReference type="VEuPathDB" id="HostDB:ENSBTAG00000003418"/>
<dbReference type="VGNC" id="VGNC:31703">
    <property type="gene designation" value="MSN"/>
</dbReference>
<dbReference type="eggNOG" id="KOG3529">
    <property type="taxonomic scope" value="Eukaryota"/>
</dbReference>
<dbReference type="GeneTree" id="ENSGT01090000260082"/>
<dbReference type="HOGENOM" id="CLU_003623_6_2_1"/>
<dbReference type="InParanoid" id="Q2HJ49"/>
<dbReference type="OMA" id="EAMLWQQ"/>
<dbReference type="OrthoDB" id="6018897at2759"/>
<dbReference type="TreeFam" id="TF313935"/>
<dbReference type="Proteomes" id="UP000009136">
    <property type="component" value="Chromosome X"/>
</dbReference>
<dbReference type="Bgee" id="ENSBTAG00000003418">
    <property type="expression patterns" value="Expressed in monocyte and 103 other cell types or tissues"/>
</dbReference>
<dbReference type="GO" id="GO:0005912">
    <property type="term" value="C:adherens junction"/>
    <property type="evidence" value="ECO:0000318"/>
    <property type="project" value="GO_Central"/>
</dbReference>
<dbReference type="GO" id="GO:0045177">
    <property type="term" value="C:apical part of cell"/>
    <property type="evidence" value="ECO:0000318"/>
    <property type="project" value="GO_Central"/>
</dbReference>
<dbReference type="GO" id="GO:0016324">
    <property type="term" value="C:apical plasma membrane"/>
    <property type="evidence" value="ECO:0007669"/>
    <property type="project" value="UniProtKB-SubCell"/>
</dbReference>
<dbReference type="GO" id="GO:0016323">
    <property type="term" value="C:basolateral plasma membrane"/>
    <property type="evidence" value="ECO:0007669"/>
    <property type="project" value="Ensembl"/>
</dbReference>
<dbReference type="GO" id="GO:0009986">
    <property type="term" value="C:cell surface"/>
    <property type="evidence" value="ECO:0007669"/>
    <property type="project" value="Ensembl"/>
</dbReference>
<dbReference type="GO" id="GO:0005856">
    <property type="term" value="C:cytoskeleton"/>
    <property type="evidence" value="ECO:0007669"/>
    <property type="project" value="UniProtKB-SubCell"/>
</dbReference>
<dbReference type="GO" id="GO:0030175">
    <property type="term" value="C:filopodium"/>
    <property type="evidence" value="ECO:0000318"/>
    <property type="project" value="GO_Central"/>
</dbReference>
<dbReference type="GO" id="GO:0005925">
    <property type="term" value="C:focal adhesion"/>
    <property type="evidence" value="ECO:0007669"/>
    <property type="project" value="Ensembl"/>
</dbReference>
<dbReference type="GO" id="GO:0005902">
    <property type="term" value="C:microvillus"/>
    <property type="evidence" value="ECO:0000250"/>
    <property type="project" value="UniProtKB"/>
</dbReference>
<dbReference type="GO" id="GO:0031528">
    <property type="term" value="C:microvillus membrane"/>
    <property type="evidence" value="ECO:0007669"/>
    <property type="project" value="UniProtKB-SubCell"/>
</dbReference>
<dbReference type="GO" id="GO:0048471">
    <property type="term" value="C:perinuclear region of cytoplasm"/>
    <property type="evidence" value="ECO:0007669"/>
    <property type="project" value="Ensembl"/>
</dbReference>
<dbReference type="GO" id="GO:0005886">
    <property type="term" value="C:plasma membrane"/>
    <property type="evidence" value="ECO:0000318"/>
    <property type="project" value="GO_Central"/>
</dbReference>
<dbReference type="GO" id="GO:0031143">
    <property type="term" value="C:pseudopodium"/>
    <property type="evidence" value="ECO:0007669"/>
    <property type="project" value="Ensembl"/>
</dbReference>
<dbReference type="GO" id="GO:0001931">
    <property type="term" value="C:uropod"/>
    <property type="evidence" value="ECO:0007669"/>
    <property type="project" value="Ensembl"/>
</dbReference>
<dbReference type="GO" id="GO:0003779">
    <property type="term" value="F:actin binding"/>
    <property type="evidence" value="ECO:0000318"/>
    <property type="project" value="GO_Central"/>
</dbReference>
<dbReference type="GO" id="GO:0050839">
    <property type="term" value="F:cell adhesion molecule binding"/>
    <property type="evidence" value="ECO:0000318"/>
    <property type="project" value="GO_Central"/>
</dbReference>
<dbReference type="GO" id="GO:0003725">
    <property type="term" value="F:double-stranded RNA binding"/>
    <property type="evidence" value="ECO:0007669"/>
    <property type="project" value="Ensembl"/>
</dbReference>
<dbReference type="GO" id="GO:0019901">
    <property type="term" value="F:protein kinase binding"/>
    <property type="evidence" value="ECO:0007669"/>
    <property type="project" value="Ensembl"/>
</dbReference>
<dbReference type="GO" id="GO:0005102">
    <property type="term" value="F:signaling receptor binding"/>
    <property type="evidence" value="ECO:0007669"/>
    <property type="project" value="Ensembl"/>
</dbReference>
<dbReference type="GO" id="GO:0071394">
    <property type="term" value="P:cellular response to testosterone stimulus"/>
    <property type="evidence" value="ECO:0007669"/>
    <property type="project" value="Ensembl"/>
</dbReference>
<dbReference type="GO" id="GO:0061028">
    <property type="term" value="P:establishment of endothelial barrier"/>
    <property type="evidence" value="ECO:0007669"/>
    <property type="project" value="Ensembl"/>
</dbReference>
<dbReference type="GO" id="GO:0045198">
    <property type="term" value="P:establishment of epithelial cell apical/basal polarity"/>
    <property type="evidence" value="ECO:0007669"/>
    <property type="project" value="Ensembl"/>
</dbReference>
<dbReference type="GO" id="GO:0022612">
    <property type="term" value="P:gland morphogenesis"/>
    <property type="evidence" value="ECO:0007669"/>
    <property type="project" value="Ensembl"/>
</dbReference>
<dbReference type="GO" id="GO:0001771">
    <property type="term" value="P:immunological synapse formation"/>
    <property type="evidence" value="ECO:0000250"/>
    <property type="project" value="UniProtKB"/>
</dbReference>
<dbReference type="GO" id="GO:0022614">
    <property type="term" value="P:membrane to membrane docking"/>
    <property type="evidence" value="ECO:0007669"/>
    <property type="project" value="Ensembl"/>
</dbReference>
<dbReference type="GO" id="GO:2000643">
    <property type="term" value="P:positive regulation of early endosome to late endosome transport"/>
    <property type="evidence" value="ECO:0000318"/>
    <property type="project" value="GO_Central"/>
</dbReference>
<dbReference type="GO" id="GO:0010628">
    <property type="term" value="P:positive regulation of gene expression"/>
    <property type="evidence" value="ECO:0007669"/>
    <property type="project" value="Ensembl"/>
</dbReference>
<dbReference type="GO" id="GO:0071803">
    <property type="term" value="P:positive regulation of podosome assembly"/>
    <property type="evidence" value="ECO:0007669"/>
    <property type="project" value="Ensembl"/>
</dbReference>
<dbReference type="GO" id="GO:0045732">
    <property type="term" value="P:positive regulation of protein catabolic process"/>
    <property type="evidence" value="ECO:0007669"/>
    <property type="project" value="Ensembl"/>
</dbReference>
<dbReference type="GO" id="GO:1902966">
    <property type="term" value="P:positive regulation of protein localization to early endosome"/>
    <property type="evidence" value="ECO:0000318"/>
    <property type="project" value="GO_Central"/>
</dbReference>
<dbReference type="GO" id="GO:0008360">
    <property type="term" value="P:regulation of cell shape"/>
    <property type="evidence" value="ECO:0000318"/>
    <property type="project" value="GO_Central"/>
</dbReference>
<dbReference type="GO" id="GO:0008361">
    <property type="term" value="P:regulation of cell size"/>
    <property type="evidence" value="ECO:0007669"/>
    <property type="project" value="Ensembl"/>
</dbReference>
<dbReference type="GO" id="GO:2000401">
    <property type="term" value="P:regulation of lymphocyte migration"/>
    <property type="evidence" value="ECO:0007669"/>
    <property type="project" value="Ensembl"/>
</dbReference>
<dbReference type="GO" id="GO:1902115">
    <property type="term" value="P:regulation of organelle assembly"/>
    <property type="evidence" value="ECO:0000318"/>
    <property type="project" value="GO_Central"/>
</dbReference>
<dbReference type="GO" id="GO:0070489">
    <property type="term" value="P:T cell aggregation"/>
    <property type="evidence" value="ECO:0000250"/>
    <property type="project" value="UniProtKB"/>
</dbReference>
<dbReference type="GO" id="GO:0072678">
    <property type="term" value="P:T cell migration"/>
    <property type="evidence" value="ECO:0000250"/>
    <property type="project" value="UniProtKB"/>
</dbReference>
<dbReference type="GO" id="GO:0042098">
    <property type="term" value="P:T cell proliferation"/>
    <property type="evidence" value="ECO:0000250"/>
    <property type="project" value="UniProtKB"/>
</dbReference>
<dbReference type="CDD" id="cd14473">
    <property type="entry name" value="FERM_B-lobe"/>
    <property type="match status" value="1"/>
</dbReference>
<dbReference type="CDD" id="cd13194">
    <property type="entry name" value="FERM_C_ERM"/>
    <property type="match status" value="1"/>
</dbReference>
<dbReference type="CDD" id="cd17187">
    <property type="entry name" value="FERM_F1_ERM"/>
    <property type="match status" value="1"/>
</dbReference>
<dbReference type="FunFam" id="2.30.29.30:FF:000003">
    <property type="entry name" value="Radixin isoform 1"/>
    <property type="match status" value="1"/>
</dbReference>
<dbReference type="FunFam" id="1.20.80.10:FF:000002">
    <property type="entry name" value="radixin isoform X1"/>
    <property type="match status" value="1"/>
</dbReference>
<dbReference type="FunFam" id="3.10.20.90:FF:000013">
    <property type="entry name" value="radixin isoform X1"/>
    <property type="match status" value="1"/>
</dbReference>
<dbReference type="FunFam" id="1.20.5.450:FF:000001">
    <property type="entry name" value="radixin isoform X2"/>
    <property type="match status" value="1"/>
</dbReference>
<dbReference type="Gene3D" id="1.20.5.450">
    <property type="match status" value="1"/>
</dbReference>
<dbReference type="Gene3D" id="1.20.80.10">
    <property type="match status" value="1"/>
</dbReference>
<dbReference type="Gene3D" id="6.10.360.10">
    <property type="match status" value="1"/>
</dbReference>
<dbReference type="Gene3D" id="3.10.20.90">
    <property type="entry name" value="Phosphatidylinositol 3-kinase Catalytic Subunit, Chain A, domain 1"/>
    <property type="match status" value="1"/>
</dbReference>
<dbReference type="Gene3D" id="2.30.29.30">
    <property type="entry name" value="Pleckstrin-homology domain (PH domain)/Phosphotyrosine-binding domain (PTB)"/>
    <property type="match status" value="1"/>
</dbReference>
<dbReference type="InterPro" id="IPR019749">
    <property type="entry name" value="Band_41_domain"/>
</dbReference>
<dbReference type="InterPro" id="IPR011174">
    <property type="entry name" value="ERM"/>
</dbReference>
<dbReference type="InterPro" id="IPR011259">
    <property type="entry name" value="ERM_C_dom"/>
</dbReference>
<dbReference type="InterPro" id="IPR041789">
    <property type="entry name" value="ERM_FERM_C"/>
</dbReference>
<dbReference type="InterPro" id="IPR046810">
    <property type="entry name" value="ERM_helical"/>
</dbReference>
<dbReference type="InterPro" id="IPR000798">
    <property type="entry name" value="Ez/rad/moesin-like"/>
</dbReference>
<dbReference type="InterPro" id="IPR014352">
    <property type="entry name" value="FERM/acyl-CoA-bd_prot_sf"/>
</dbReference>
<dbReference type="InterPro" id="IPR035963">
    <property type="entry name" value="FERM_2"/>
</dbReference>
<dbReference type="InterPro" id="IPR019748">
    <property type="entry name" value="FERM_central"/>
</dbReference>
<dbReference type="InterPro" id="IPR019747">
    <property type="entry name" value="FERM_CS"/>
</dbReference>
<dbReference type="InterPro" id="IPR000299">
    <property type="entry name" value="FERM_domain"/>
</dbReference>
<dbReference type="InterPro" id="IPR018979">
    <property type="entry name" value="FERM_N"/>
</dbReference>
<dbReference type="InterPro" id="IPR018980">
    <property type="entry name" value="FERM_PH-like_C"/>
</dbReference>
<dbReference type="InterPro" id="IPR008954">
    <property type="entry name" value="Moesin_tail_sf"/>
</dbReference>
<dbReference type="InterPro" id="IPR011993">
    <property type="entry name" value="PH-like_dom_sf"/>
</dbReference>
<dbReference type="InterPro" id="IPR029071">
    <property type="entry name" value="Ubiquitin-like_domsf"/>
</dbReference>
<dbReference type="PANTHER" id="PTHR23281">
    <property type="entry name" value="MERLIN/MOESIN/EZRIN/RADIXIN"/>
    <property type="match status" value="1"/>
</dbReference>
<dbReference type="Pfam" id="PF00769">
    <property type="entry name" value="ERM_C"/>
    <property type="match status" value="1"/>
</dbReference>
<dbReference type="Pfam" id="PF20492">
    <property type="entry name" value="ERM_helical"/>
    <property type="match status" value="1"/>
</dbReference>
<dbReference type="Pfam" id="PF09380">
    <property type="entry name" value="FERM_C"/>
    <property type="match status" value="1"/>
</dbReference>
<dbReference type="Pfam" id="PF00373">
    <property type="entry name" value="FERM_M"/>
    <property type="match status" value="1"/>
</dbReference>
<dbReference type="Pfam" id="PF09379">
    <property type="entry name" value="FERM_N"/>
    <property type="match status" value="1"/>
</dbReference>
<dbReference type="PIRSF" id="PIRSF002305">
    <property type="entry name" value="ERM"/>
    <property type="match status" value="1"/>
</dbReference>
<dbReference type="PRINTS" id="PR00935">
    <property type="entry name" value="BAND41"/>
</dbReference>
<dbReference type="PRINTS" id="PR00661">
    <property type="entry name" value="ERMFAMILY"/>
</dbReference>
<dbReference type="SMART" id="SM00295">
    <property type="entry name" value="B41"/>
    <property type="match status" value="1"/>
</dbReference>
<dbReference type="SMART" id="SM01196">
    <property type="entry name" value="FERM_C"/>
    <property type="match status" value="1"/>
</dbReference>
<dbReference type="SUPFAM" id="SSF48678">
    <property type="entry name" value="Moesin tail domain"/>
    <property type="match status" value="1"/>
</dbReference>
<dbReference type="SUPFAM" id="SSF50729">
    <property type="entry name" value="PH domain-like"/>
    <property type="match status" value="1"/>
</dbReference>
<dbReference type="SUPFAM" id="SSF47031">
    <property type="entry name" value="Second domain of FERM"/>
    <property type="match status" value="1"/>
</dbReference>
<dbReference type="SUPFAM" id="SSF54236">
    <property type="entry name" value="Ubiquitin-like"/>
    <property type="match status" value="1"/>
</dbReference>
<dbReference type="PROSITE" id="PS00660">
    <property type="entry name" value="FERM_1"/>
    <property type="match status" value="1"/>
</dbReference>
<dbReference type="PROSITE" id="PS00661">
    <property type="entry name" value="FERM_2"/>
    <property type="match status" value="1"/>
</dbReference>
<dbReference type="PROSITE" id="PS50057">
    <property type="entry name" value="FERM_3"/>
    <property type="match status" value="1"/>
</dbReference>
<feature type="chain" id="PRO_0000254651" description="Moesin">
    <location>
        <begin position="1"/>
        <end position="577"/>
    </location>
</feature>
<feature type="domain" description="FERM" evidence="5">
    <location>
        <begin position="2"/>
        <end position="295"/>
    </location>
</feature>
<feature type="region of interest" description="Disordered" evidence="6">
    <location>
        <begin position="375"/>
        <end position="409"/>
    </location>
</feature>
<feature type="region of interest" description="Disordered" evidence="6">
    <location>
        <begin position="466"/>
        <end position="518"/>
    </location>
</feature>
<feature type="short sequence motif" description="[IL]-x-C-x-x-[DE] motif" evidence="2">
    <location>
        <begin position="115"/>
        <end position="120"/>
    </location>
</feature>
<feature type="compositionally biased region" description="Basic and acidic residues" evidence="6">
    <location>
        <begin position="375"/>
        <end position="401"/>
    </location>
</feature>
<feature type="compositionally biased region" description="Acidic residues" evidence="6">
    <location>
        <begin position="476"/>
        <end position="487"/>
    </location>
</feature>
<feature type="compositionally biased region" description="Basic and acidic residues" evidence="6">
    <location>
        <begin position="492"/>
        <end position="518"/>
    </location>
</feature>
<feature type="modified residue" description="Phosphoserine" evidence="2">
    <location>
        <position position="74"/>
    </location>
</feature>
<feature type="modified residue" description="N6-acetyllysine" evidence="2">
    <location>
        <position position="79"/>
    </location>
</feature>
<feature type="modified residue" description="N6-succinyllysine" evidence="4">
    <location>
        <position position="83"/>
    </location>
</feature>
<feature type="modified residue" description="Phosphotyrosine" evidence="2">
    <location>
        <position position="116"/>
    </location>
</feature>
<feature type="modified residue" description="S-nitrosocysteine" evidence="2">
    <location>
        <position position="117"/>
    </location>
</feature>
<feature type="modified residue" description="N6-acetyllysine" evidence="2">
    <location>
        <position position="139"/>
    </location>
</feature>
<feature type="modified residue" description="N6-acetyllysine" evidence="3">
    <location>
        <position position="165"/>
    </location>
</feature>
<feature type="modified residue" description="Phosphoserine" evidence="2">
    <location>
        <position position="407"/>
    </location>
</feature>
<feature type="modified residue" description="Phosphoserine" evidence="2">
    <location>
        <position position="527"/>
    </location>
</feature>
<feature type="modified residue" description="Phosphothreonine; by ROCK2 and STK10" evidence="2">
    <location>
        <position position="558"/>
    </location>
</feature>
<reference key="1">
    <citation type="submission" date="2006-02" db="EMBL/GenBank/DDBJ databases">
        <authorList>
            <consortium name="NIH - Mammalian Gene Collection (MGC) project"/>
        </authorList>
    </citation>
    <scope>NUCLEOTIDE SEQUENCE [LARGE SCALE MRNA]</scope>
    <source>
        <strain>Hereford</strain>
        <tissue>Uterus</tissue>
    </source>
</reference>
<proteinExistence type="evidence at transcript level"/>
<name>MOES_BOVIN</name>
<accession>Q2HJ49</accession>